<reference key="1">
    <citation type="journal article" date="2011" name="J. Bacteriol.">
        <title>Comparative genomics of 28 Salmonella enterica isolates: evidence for CRISPR-mediated adaptive sublineage evolution.</title>
        <authorList>
            <person name="Fricke W.F."/>
            <person name="Mammel M.K."/>
            <person name="McDermott P.F."/>
            <person name="Tartera C."/>
            <person name="White D.G."/>
            <person name="Leclerc J.E."/>
            <person name="Ravel J."/>
            <person name="Cebula T.A."/>
        </authorList>
    </citation>
    <scope>NUCLEOTIDE SEQUENCE [LARGE SCALE GENOMIC DNA]</scope>
    <source>
        <strain>SL476</strain>
    </source>
</reference>
<protein>
    <recommendedName>
        <fullName evidence="1">Protein RecA</fullName>
    </recommendedName>
    <alternativeName>
        <fullName evidence="1">Recombinase A</fullName>
    </alternativeName>
</protein>
<proteinExistence type="inferred from homology"/>
<sequence length="353" mass="37944">MAIDENKQKALAAALGQIEKQFGKGSIMRLGEDRSMDVETISTGSLSLDIALGAGGLPMGRIVEIYGPESSGKTTLTLQVIAAAQREGKTCAFIDAEHALDPVYARKLGVDIDNLLCSQPDTGEQALEICDALARSGAVDVIVVDSVAALTPKAEIEGEIGDSHMGLAARMMSQAMRKLAGNLKQSNTLLIFINQIRMKIGVMFGNPETTTGGNALKFYASVRLDIRRIGAVKEGDNVVGSETRVKVVKNKIAAPFKQAEFQILYGEGINFYGELVDLGVKEKLIEKAGAWYSYNGEKIGQGKANATTWLKENPATAKEIEKRVRELLLSNQNATPDFAVDDSEGVAETNEDF</sequence>
<keyword id="KW-0067">ATP-binding</keyword>
<keyword id="KW-0963">Cytoplasm</keyword>
<keyword id="KW-0227">DNA damage</keyword>
<keyword id="KW-0233">DNA recombination</keyword>
<keyword id="KW-0234">DNA repair</keyword>
<keyword id="KW-0238">DNA-binding</keyword>
<keyword id="KW-0547">Nucleotide-binding</keyword>
<keyword id="KW-0742">SOS response</keyword>
<accession>B4TF13</accession>
<evidence type="ECO:0000255" key="1">
    <source>
        <dbReference type="HAMAP-Rule" id="MF_00268"/>
    </source>
</evidence>
<dbReference type="EMBL" id="CP001120">
    <property type="protein sequence ID" value="ACF70007.1"/>
    <property type="molecule type" value="Genomic_DNA"/>
</dbReference>
<dbReference type="RefSeq" id="WP_000963150.1">
    <property type="nucleotide sequence ID" value="NC_011083.1"/>
</dbReference>
<dbReference type="SMR" id="B4TF13"/>
<dbReference type="KEGG" id="seh:SeHA_C3015"/>
<dbReference type="HOGENOM" id="CLU_040469_3_2_6"/>
<dbReference type="Proteomes" id="UP000001866">
    <property type="component" value="Chromosome"/>
</dbReference>
<dbReference type="GO" id="GO:0005829">
    <property type="term" value="C:cytosol"/>
    <property type="evidence" value="ECO:0007669"/>
    <property type="project" value="TreeGrafter"/>
</dbReference>
<dbReference type="GO" id="GO:0005524">
    <property type="term" value="F:ATP binding"/>
    <property type="evidence" value="ECO:0007669"/>
    <property type="project" value="UniProtKB-UniRule"/>
</dbReference>
<dbReference type="GO" id="GO:0016887">
    <property type="term" value="F:ATP hydrolysis activity"/>
    <property type="evidence" value="ECO:0007669"/>
    <property type="project" value="InterPro"/>
</dbReference>
<dbReference type="GO" id="GO:0140664">
    <property type="term" value="F:ATP-dependent DNA damage sensor activity"/>
    <property type="evidence" value="ECO:0007669"/>
    <property type="project" value="InterPro"/>
</dbReference>
<dbReference type="GO" id="GO:0003684">
    <property type="term" value="F:damaged DNA binding"/>
    <property type="evidence" value="ECO:0007669"/>
    <property type="project" value="UniProtKB-UniRule"/>
</dbReference>
<dbReference type="GO" id="GO:0003697">
    <property type="term" value="F:single-stranded DNA binding"/>
    <property type="evidence" value="ECO:0007669"/>
    <property type="project" value="UniProtKB-UniRule"/>
</dbReference>
<dbReference type="GO" id="GO:0006310">
    <property type="term" value="P:DNA recombination"/>
    <property type="evidence" value="ECO:0007669"/>
    <property type="project" value="UniProtKB-UniRule"/>
</dbReference>
<dbReference type="GO" id="GO:0006281">
    <property type="term" value="P:DNA repair"/>
    <property type="evidence" value="ECO:0007669"/>
    <property type="project" value="UniProtKB-UniRule"/>
</dbReference>
<dbReference type="GO" id="GO:0009432">
    <property type="term" value="P:SOS response"/>
    <property type="evidence" value="ECO:0007669"/>
    <property type="project" value="UniProtKB-UniRule"/>
</dbReference>
<dbReference type="CDD" id="cd00983">
    <property type="entry name" value="RecA"/>
    <property type="match status" value="1"/>
</dbReference>
<dbReference type="FunFam" id="3.40.50.300:FF:000087">
    <property type="entry name" value="Recombinase RecA"/>
    <property type="match status" value="1"/>
</dbReference>
<dbReference type="Gene3D" id="3.40.50.300">
    <property type="entry name" value="P-loop containing nucleotide triphosphate hydrolases"/>
    <property type="match status" value="1"/>
</dbReference>
<dbReference type="HAMAP" id="MF_00268">
    <property type="entry name" value="RecA"/>
    <property type="match status" value="1"/>
</dbReference>
<dbReference type="InterPro" id="IPR003593">
    <property type="entry name" value="AAA+_ATPase"/>
</dbReference>
<dbReference type="InterPro" id="IPR013765">
    <property type="entry name" value="DNA_recomb/repair_RecA"/>
</dbReference>
<dbReference type="InterPro" id="IPR020584">
    <property type="entry name" value="DNA_recomb/repair_RecA_CS"/>
</dbReference>
<dbReference type="InterPro" id="IPR027417">
    <property type="entry name" value="P-loop_NTPase"/>
</dbReference>
<dbReference type="InterPro" id="IPR049261">
    <property type="entry name" value="RecA-like_C"/>
</dbReference>
<dbReference type="InterPro" id="IPR049428">
    <property type="entry name" value="RecA-like_N"/>
</dbReference>
<dbReference type="InterPro" id="IPR020588">
    <property type="entry name" value="RecA_ATP-bd"/>
</dbReference>
<dbReference type="InterPro" id="IPR023400">
    <property type="entry name" value="RecA_C_sf"/>
</dbReference>
<dbReference type="InterPro" id="IPR020587">
    <property type="entry name" value="RecA_monomer-monomer_interface"/>
</dbReference>
<dbReference type="NCBIfam" id="TIGR02012">
    <property type="entry name" value="tigrfam_recA"/>
    <property type="match status" value="1"/>
</dbReference>
<dbReference type="PANTHER" id="PTHR45900:SF1">
    <property type="entry name" value="MITOCHONDRIAL DNA REPAIR PROTEIN RECA HOMOLOG-RELATED"/>
    <property type="match status" value="1"/>
</dbReference>
<dbReference type="PANTHER" id="PTHR45900">
    <property type="entry name" value="RECA"/>
    <property type="match status" value="1"/>
</dbReference>
<dbReference type="Pfam" id="PF00154">
    <property type="entry name" value="RecA"/>
    <property type="match status" value="1"/>
</dbReference>
<dbReference type="Pfam" id="PF21096">
    <property type="entry name" value="RecA_C"/>
    <property type="match status" value="1"/>
</dbReference>
<dbReference type="PRINTS" id="PR00142">
    <property type="entry name" value="RECA"/>
</dbReference>
<dbReference type="SMART" id="SM00382">
    <property type="entry name" value="AAA"/>
    <property type="match status" value="1"/>
</dbReference>
<dbReference type="SUPFAM" id="SSF52540">
    <property type="entry name" value="P-loop containing nucleoside triphosphate hydrolases"/>
    <property type="match status" value="1"/>
</dbReference>
<dbReference type="SUPFAM" id="SSF54752">
    <property type="entry name" value="RecA protein, C-terminal domain"/>
    <property type="match status" value="1"/>
</dbReference>
<dbReference type="PROSITE" id="PS00321">
    <property type="entry name" value="RECA_1"/>
    <property type="match status" value="1"/>
</dbReference>
<dbReference type="PROSITE" id="PS50162">
    <property type="entry name" value="RECA_2"/>
    <property type="match status" value="1"/>
</dbReference>
<dbReference type="PROSITE" id="PS50163">
    <property type="entry name" value="RECA_3"/>
    <property type="match status" value="1"/>
</dbReference>
<feature type="chain" id="PRO_1000114364" description="Protein RecA">
    <location>
        <begin position="1"/>
        <end position="353"/>
    </location>
</feature>
<feature type="binding site" evidence="1">
    <location>
        <begin position="67"/>
        <end position="74"/>
    </location>
    <ligand>
        <name>ATP</name>
        <dbReference type="ChEBI" id="CHEBI:30616"/>
    </ligand>
</feature>
<gene>
    <name evidence="1" type="primary">recA</name>
    <name type="ordered locus">SeHA_C3015</name>
</gene>
<name>RECA_SALHS</name>
<organism>
    <name type="scientific">Salmonella heidelberg (strain SL476)</name>
    <dbReference type="NCBI Taxonomy" id="454169"/>
    <lineage>
        <taxon>Bacteria</taxon>
        <taxon>Pseudomonadati</taxon>
        <taxon>Pseudomonadota</taxon>
        <taxon>Gammaproteobacteria</taxon>
        <taxon>Enterobacterales</taxon>
        <taxon>Enterobacteriaceae</taxon>
        <taxon>Salmonella</taxon>
    </lineage>
</organism>
<comment type="function">
    <text evidence="1">Can catalyze the hydrolysis of ATP in the presence of single-stranded DNA, the ATP-dependent uptake of single-stranded DNA by duplex DNA, and the ATP-dependent hybridization of homologous single-stranded DNAs. It interacts with LexA causing its activation and leading to its autocatalytic cleavage.</text>
</comment>
<comment type="subcellular location">
    <subcellularLocation>
        <location evidence="1">Cytoplasm</location>
    </subcellularLocation>
</comment>
<comment type="similarity">
    <text evidence="1">Belongs to the RecA family.</text>
</comment>